<comment type="function">
    <text evidence="1">K(+)/H(+) antiporter that extrudes potassium in exchange for external protons and maintains the internal concentration of potassium under toxic levels.</text>
</comment>
<comment type="catalytic activity">
    <reaction evidence="1">
        <text>K(+)(in) + H(+)(out) = K(+)(out) + H(+)(in)</text>
        <dbReference type="Rhea" id="RHEA:29467"/>
        <dbReference type="ChEBI" id="CHEBI:15378"/>
        <dbReference type="ChEBI" id="CHEBI:29103"/>
    </reaction>
    <physiologicalReaction direction="left-to-right" evidence="1">
        <dbReference type="Rhea" id="RHEA:29468"/>
    </physiologicalReaction>
</comment>
<comment type="subcellular location">
    <subcellularLocation>
        <location evidence="1">Cell inner membrane</location>
        <topology evidence="1">Multi-pass membrane protein</topology>
    </subcellularLocation>
</comment>
<comment type="similarity">
    <text evidence="1">Belongs to the monovalent cation:proton antiporter 1 (CPA1) transporter (TC 2.A.36) family. NhaP2 subfamily.</text>
</comment>
<comment type="sequence caution" evidence="2">
    <conflict type="erroneous initiation">
        <sequence resource="EMBL-CDS" id="ABB61381"/>
    </conflict>
</comment>
<organism>
    <name type="scientific">Shigella dysenteriae serotype 1 (strain Sd197)</name>
    <dbReference type="NCBI Taxonomy" id="300267"/>
    <lineage>
        <taxon>Bacteria</taxon>
        <taxon>Pseudomonadati</taxon>
        <taxon>Pseudomonadota</taxon>
        <taxon>Gammaproteobacteria</taxon>
        <taxon>Enterobacterales</taxon>
        <taxon>Enterobacteriaceae</taxon>
        <taxon>Shigella</taxon>
    </lineage>
</organism>
<proteinExistence type="inferred from homology"/>
<keyword id="KW-0050">Antiport</keyword>
<keyword id="KW-0997">Cell inner membrane</keyword>
<keyword id="KW-1003">Cell membrane</keyword>
<keyword id="KW-0406">Ion transport</keyword>
<keyword id="KW-0472">Membrane</keyword>
<keyword id="KW-0630">Potassium</keyword>
<keyword id="KW-0633">Potassium transport</keyword>
<keyword id="KW-1185">Reference proteome</keyword>
<keyword id="KW-0812">Transmembrane</keyword>
<keyword id="KW-1133">Transmembrane helix</keyword>
<keyword id="KW-0813">Transport</keyword>
<accession>Q32H24</accession>
<protein>
    <recommendedName>
        <fullName evidence="1">K(+)/H(+) antiporter NhaP2</fullName>
    </recommendedName>
    <alternativeName>
        <fullName evidence="1">Potassium/proton antiporter NhaP2</fullName>
    </alternativeName>
</protein>
<evidence type="ECO:0000255" key="1">
    <source>
        <dbReference type="HAMAP-Rule" id="MF_01075"/>
    </source>
</evidence>
<evidence type="ECO:0000305" key="2"/>
<reference key="1">
    <citation type="journal article" date="2005" name="Nucleic Acids Res.">
        <title>Genome dynamics and diversity of Shigella species, the etiologic agents of bacillary dysentery.</title>
        <authorList>
            <person name="Yang F."/>
            <person name="Yang J."/>
            <person name="Zhang X."/>
            <person name="Chen L."/>
            <person name="Jiang Y."/>
            <person name="Yan Y."/>
            <person name="Tang X."/>
            <person name="Wang J."/>
            <person name="Xiong Z."/>
            <person name="Dong J."/>
            <person name="Xue Y."/>
            <person name="Zhu Y."/>
            <person name="Xu X."/>
            <person name="Sun L."/>
            <person name="Chen S."/>
            <person name="Nie H."/>
            <person name="Peng J."/>
            <person name="Xu J."/>
            <person name="Wang Y."/>
            <person name="Yuan Z."/>
            <person name="Wen Y."/>
            <person name="Yao Z."/>
            <person name="Shen Y."/>
            <person name="Qiang B."/>
            <person name="Hou Y."/>
            <person name="Yu J."/>
            <person name="Jin Q."/>
        </authorList>
    </citation>
    <scope>NUCLEOTIDE SEQUENCE [LARGE SCALE GENOMIC DNA]</scope>
    <source>
        <strain>Sd197</strain>
    </source>
</reference>
<gene>
    <name evidence="1" type="primary">nhaP2</name>
    <name type="synonym">cvrA</name>
    <name type="ordered locus">SDY_1230</name>
</gene>
<feature type="chain" id="PRO_0000278152" description="K(+)/H(+) antiporter NhaP2">
    <location>
        <begin position="1"/>
        <end position="578"/>
    </location>
</feature>
<feature type="transmembrane region" description="Helical" evidence="1">
    <location>
        <begin position="6"/>
        <end position="26"/>
    </location>
</feature>
<feature type="transmembrane region" description="Helical" evidence="1">
    <location>
        <begin position="30"/>
        <end position="50"/>
    </location>
</feature>
<feature type="transmembrane region" description="Helical" evidence="1">
    <location>
        <begin position="58"/>
        <end position="78"/>
    </location>
</feature>
<feature type="transmembrane region" description="Helical" evidence="1">
    <location>
        <begin position="87"/>
        <end position="107"/>
    </location>
</feature>
<feature type="transmembrane region" description="Helical" evidence="1">
    <location>
        <begin position="109"/>
        <end position="129"/>
    </location>
</feature>
<feature type="transmembrane region" description="Helical" evidence="1">
    <location>
        <begin position="156"/>
        <end position="176"/>
    </location>
</feature>
<feature type="transmembrane region" description="Helical" evidence="1">
    <location>
        <begin position="185"/>
        <end position="205"/>
    </location>
</feature>
<feature type="transmembrane region" description="Helical" evidence="1">
    <location>
        <begin position="216"/>
        <end position="236"/>
    </location>
</feature>
<feature type="transmembrane region" description="Helical" evidence="1">
    <location>
        <begin position="237"/>
        <end position="257"/>
    </location>
</feature>
<feature type="transmembrane region" description="Helical" evidence="1">
    <location>
        <begin position="270"/>
        <end position="290"/>
    </location>
</feature>
<feature type="transmembrane region" description="Helical" evidence="1">
    <location>
        <begin position="293"/>
        <end position="313"/>
    </location>
</feature>
<feature type="transmembrane region" description="Helical" evidence="1">
    <location>
        <begin position="334"/>
        <end position="354"/>
    </location>
</feature>
<feature type="transmembrane region" description="Helical" evidence="1">
    <location>
        <begin position="363"/>
        <end position="383"/>
    </location>
</feature>
<feature type="domain" description="RCK C-terminal" evidence="1">
    <location>
        <begin position="403"/>
        <end position="485"/>
    </location>
</feature>
<name>NHAP2_SHIDS</name>
<sequence>MDATTIISLFILGSILVTSSILLSSFSSRLGIPILVIFLAIGMLAGVDGVGGIPFDNYPFAYMVSNLALAIILLDGGMRTQASSFRVALGPALSLATLGVLITSGLTGMMAAWLFNLDLIEGLLIGAIVGSTDAAAVFSLLGGKGLNERVGSTLEIESGSNDPMAVFLTITLIAMIQQHESSVSWMFVVDILQQFGLGIVIGLGGGYLLLQMINRIALPAGLYPLLALSGGILIFALTTALEGSGILAVYLCGFLLGNRPIRNRYGILQNFDGLAWLAQIAMFLVLGLLVNPSDLLPIAIPALILSAWMIFFARPLSVFAGLLPFRGFNLRERVFISWVGLRGAVPIILAVFPMMAGLENARLFFNVAFFVVLVSLLLQGTSLSWAAKKAKVVVPPVGRPVSRVGLDIHPENPWEQFVYQLSADKWCVSAALRDLHMPKETRIAALFRDNQLLHPTGSTRLREGDVLCVIGRERDLPALGKLFSQSPPVALDQRFFGDFILEASAKYADVALIYGLEDGREYRDKQQTLGEIVQQLLGAAPVVGDQVEFAGMIWTVAEKEDNEVLKIGVRVAEEEAES</sequence>
<dbReference type="EMBL" id="CP000034">
    <property type="protein sequence ID" value="ABB61381.1"/>
    <property type="status" value="ALT_INIT"/>
    <property type="molecule type" value="Genomic_DNA"/>
</dbReference>
<dbReference type="RefSeq" id="WP_000340211.1">
    <property type="nucleotide sequence ID" value="NC_007606.1"/>
</dbReference>
<dbReference type="RefSeq" id="YP_402872.2">
    <property type="nucleotide sequence ID" value="NC_007606.1"/>
</dbReference>
<dbReference type="SMR" id="Q32H24"/>
<dbReference type="STRING" id="300267.SDY_1230"/>
<dbReference type="EnsemblBacteria" id="ABB61381">
    <property type="protein sequence ID" value="ABB61381"/>
    <property type="gene ID" value="SDY_1230"/>
</dbReference>
<dbReference type="KEGG" id="sdy:SDY_1230"/>
<dbReference type="PATRIC" id="fig|300267.13.peg.1460"/>
<dbReference type="HOGENOM" id="CLU_005912_9_2_6"/>
<dbReference type="Proteomes" id="UP000002716">
    <property type="component" value="Chromosome"/>
</dbReference>
<dbReference type="GO" id="GO:0005886">
    <property type="term" value="C:plasma membrane"/>
    <property type="evidence" value="ECO:0007669"/>
    <property type="project" value="UniProtKB-SubCell"/>
</dbReference>
<dbReference type="GO" id="GO:0050660">
    <property type="term" value="F:flavin adenine dinucleotide binding"/>
    <property type="evidence" value="ECO:0007669"/>
    <property type="project" value="InterPro"/>
</dbReference>
<dbReference type="GO" id="GO:0015386">
    <property type="term" value="F:potassium:proton antiporter activity"/>
    <property type="evidence" value="ECO:0007669"/>
    <property type="project" value="UniProtKB-UniRule"/>
</dbReference>
<dbReference type="GO" id="GO:0006884">
    <property type="term" value="P:cell volume homeostasis"/>
    <property type="evidence" value="ECO:0007669"/>
    <property type="project" value="InterPro"/>
</dbReference>
<dbReference type="FunFam" id="1.20.1530.20:FF:000002">
    <property type="entry name" value="K(+)/H(+) antiporter NhaP2"/>
    <property type="match status" value="1"/>
</dbReference>
<dbReference type="FunFam" id="3.30.465.10:FF:000009">
    <property type="entry name" value="K(+)/H(+) antiporter NhaP2"/>
    <property type="match status" value="1"/>
</dbReference>
<dbReference type="FunFam" id="3.30.70.1450:FF:000007">
    <property type="entry name" value="K(+)/H(+) antiporter NhaP2"/>
    <property type="match status" value="1"/>
</dbReference>
<dbReference type="Gene3D" id="1.20.1530.20">
    <property type="match status" value="1"/>
</dbReference>
<dbReference type="Gene3D" id="3.30.465.10">
    <property type="match status" value="1"/>
</dbReference>
<dbReference type="Gene3D" id="3.30.70.1450">
    <property type="entry name" value="Regulator of K+ conductance, C-terminal domain"/>
    <property type="match status" value="1"/>
</dbReference>
<dbReference type="HAMAP" id="MF_01075">
    <property type="entry name" value="NhaP2"/>
    <property type="match status" value="1"/>
</dbReference>
<dbReference type="InterPro" id="IPR006153">
    <property type="entry name" value="Cation/H_exchanger_TM"/>
</dbReference>
<dbReference type="InterPro" id="IPR036318">
    <property type="entry name" value="FAD-bd_PCMH-like_sf"/>
</dbReference>
<dbReference type="InterPro" id="IPR016169">
    <property type="entry name" value="FAD-bd_PCMH_sub2"/>
</dbReference>
<dbReference type="InterPro" id="IPR038770">
    <property type="entry name" value="Na+/solute_symporter_sf"/>
</dbReference>
<dbReference type="InterPro" id="IPR023729">
    <property type="entry name" value="NhaP2"/>
</dbReference>
<dbReference type="InterPro" id="IPR006037">
    <property type="entry name" value="RCK_C"/>
</dbReference>
<dbReference type="InterPro" id="IPR036721">
    <property type="entry name" value="RCK_C_sf"/>
</dbReference>
<dbReference type="InterPro" id="IPR005170">
    <property type="entry name" value="Transptr-assoc_dom"/>
</dbReference>
<dbReference type="NCBIfam" id="NF003714">
    <property type="entry name" value="PRK05326.1-1"/>
    <property type="match status" value="1"/>
</dbReference>
<dbReference type="NCBIfam" id="NF003715">
    <property type="entry name" value="PRK05326.1-2"/>
    <property type="match status" value="1"/>
</dbReference>
<dbReference type="NCBIfam" id="NF003716">
    <property type="entry name" value="PRK05326.1-3"/>
    <property type="match status" value="1"/>
</dbReference>
<dbReference type="PANTHER" id="PTHR32507:SF7">
    <property type="entry name" value="K(+)_H(+) ANTIPORTER NHAP2"/>
    <property type="match status" value="1"/>
</dbReference>
<dbReference type="PANTHER" id="PTHR32507">
    <property type="entry name" value="NA(+)/H(+) ANTIPORTER 1"/>
    <property type="match status" value="1"/>
</dbReference>
<dbReference type="Pfam" id="PF03471">
    <property type="entry name" value="CorC_HlyC"/>
    <property type="match status" value="1"/>
</dbReference>
<dbReference type="Pfam" id="PF00999">
    <property type="entry name" value="Na_H_Exchanger"/>
    <property type="match status" value="1"/>
</dbReference>
<dbReference type="Pfam" id="PF02080">
    <property type="entry name" value="TrkA_C"/>
    <property type="match status" value="1"/>
</dbReference>
<dbReference type="SMART" id="SM01091">
    <property type="entry name" value="CorC_HlyC"/>
    <property type="match status" value="1"/>
</dbReference>
<dbReference type="SUPFAM" id="SSF56176">
    <property type="entry name" value="FAD-binding/transporter-associated domain-like"/>
    <property type="match status" value="1"/>
</dbReference>
<dbReference type="SUPFAM" id="SSF116726">
    <property type="entry name" value="TrkA C-terminal domain-like"/>
    <property type="match status" value="1"/>
</dbReference>
<dbReference type="PROSITE" id="PS51202">
    <property type="entry name" value="RCK_C"/>
    <property type="match status" value="1"/>
</dbReference>